<dbReference type="EC" id="3.4.24.-"/>
<dbReference type="EMBL" id="AB021228">
    <property type="protein sequence ID" value="BAA78420.1"/>
    <property type="molecule type" value="mRNA"/>
</dbReference>
<dbReference type="EMBL" id="AF282844">
    <property type="protein sequence ID" value="AAG17704.1"/>
    <property type="molecule type" value="mRNA"/>
</dbReference>
<dbReference type="EMBL" id="AL683877">
    <property type="status" value="NOT_ANNOTATED_CDS"/>
    <property type="molecule type" value="Genomic_DNA"/>
</dbReference>
<dbReference type="EMBL" id="AL805957">
    <property type="status" value="NOT_ANNOTATED_CDS"/>
    <property type="molecule type" value="Genomic_DNA"/>
</dbReference>
<dbReference type="EMBL" id="CH466538">
    <property type="protein sequence ID" value="EDL05585.1"/>
    <property type="molecule type" value="Genomic_DNA"/>
</dbReference>
<dbReference type="EMBL" id="CH466538">
    <property type="protein sequence ID" value="EDL05587.1"/>
    <property type="molecule type" value="Genomic_DNA"/>
</dbReference>
<dbReference type="EMBL" id="BC057926">
    <property type="protein sequence ID" value="AAH57926.1"/>
    <property type="molecule type" value="mRNA"/>
</dbReference>
<dbReference type="CCDS" id="CCDS17989.1"/>
<dbReference type="RefSeq" id="NP_001366447.1">
    <property type="nucleotide sequence ID" value="NM_001379518.1"/>
</dbReference>
<dbReference type="RefSeq" id="NP_001366448.1">
    <property type="nucleotide sequence ID" value="NM_001379519.1"/>
</dbReference>
<dbReference type="RefSeq" id="NP_062698.2">
    <property type="nucleotide sequence ID" value="NM_019724.4"/>
</dbReference>
<dbReference type="RefSeq" id="XP_017175506.1">
    <property type="nucleotide sequence ID" value="XM_017320017.1"/>
</dbReference>
<dbReference type="SMR" id="Q9WTR0"/>
<dbReference type="FunCoup" id="Q9WTR0">
    <property type="interactions" value="600"/>
</dbReference>
<dbReference type="STRING" id="10090.ENSMUSP00000029881"/>
<dbReference type="MEROPS" id="M10.016"/>
<dbReference type="GlyCosmos" id="Q9WTR0">
    <property type="glycosylation" value="1 site, No reported glycans"/>
</dbReference>
<dbReference type="GlyGen" id="Q9WTR0">
    <property type="glycosylation" value="1 site"/>
</dbReference>
<dbReference type="PhosphoSitePlus" id="Q9WTR0"/>
<dbReference type="PaxDb" id="10090-ENSMUSP00000029881"/>
<dbReference type="ProteomicsDB" id="295686"/>
<dbReference type="Antibodypedia" id="12678">
    <property type="antibodies" value="417 antibodies from 38 providers"/>
</dbReference>
<dbReference type="DNASU" id="17389"/>
<dbReference type="Ensembl" id="ENSMUST00000029881.10">
    <property type="protein sequence ID" value="ENSMUSP00000029881.4"/>
    <property type="gene ID" value="ENSMUSG00000028226.16"/>
</dbReference>
<dbReference type="GeneID" id="17389"/>
<dbReference type="KEGG" id="mmu:17389"/>
<dbReference type="UCSC" id="uc008sbw.2">
    <property type="organism name" value="mouse"/>
</dbReference>
<dbReference type="AGR" id="MGI:1276107"/>
<dbReference type="CTD" id="4325"/>
<dbReference type="MGI" id="MGI:1276107">
    <property type="gene designation" value="Mmp16"/>
</dbReference>
<dbReference type="VEuPathDB" id="HostDB:ENSMUSG00000028226"/>
<dbReference type="eggNOG" id="KOG1565">
    <property type="taxonomic scope" value="Eukaryota"/>
</dbReference>
<dbReference type="GeneTree" id="ENSGT00940000157532"/>
<dbReference type="InParanoid" id="Q9WTR0"/>
<dbReference type="OMA" id="RKNDRPR"/>
<dbReference type="OrthoDB" id="406838at2759"/>
<dbReference type="PhylomeDB" id="Q9WTR0"/>
<dbReference type="TreeFam" id="TF352396"/>
<dbReference type="Reactome" id="R-MMU-1592389">
    <property type="pathway name" value="Activation of Matrix Metalloproteinases"/>
</dbReference>
<dbReference type="Reactome" id="R-MMU-9839383">
    <property type="pathway name" value="TGFBR3 PTM regulation"/>
</dbReference>
<dbReference type="BioGRID-ORCS" id="17389">
    <property type="hits" value="1 hit in 80 CRISPR screens"/>
</dbReference>
<dbReference type="ChiTaRS" id="Mmp16">
    <property type="organism name" value="mouse"/>
</dbReference>
<dbReference type="PRO" id="PR:Q9WTR0"/>
<dbReference type="Proteomes" id="UP000000589">
    <property type="component" value="Chromosome 4"/>
</dbReference>
<dbReference type="RNAct" id="Q9WTR0">
    <property type="molecule type" value="protein"/>
</dbReference>
<dbReference type="Bgee" id="ENSMUSG00000028226">
    <property type="expression patterns" value="Expressed in vault of skull and 185 other cell types or tissues"/>
</dbReference>
<dbReference type="ExpressionAtlas" id="Q9WTR0">
    <property type="expression patterns" value="baseline and differential"/>
</dbReference>
<dbReference type="GO" id="GO:0031012">
    <property type="term" value="C:extracellular matrix"/>
    <property type="evidence" value="ECO:0007669"/>
    <property type="project" value="InterPro"/>
</dbReference>
<dbReference type="GO" id="GO:0005886">
    <property type="term" value="C:plasma membrane"/>
    <property type="evidence" value="ECO:0007669"/>
    <property type="project" value="UniProtKB-SubCell"/>
</dbReference>
<dbReference type="GO" id="GO:0070006">
    <property type="term" value="F:metalloaminopeptidase activity"/>
    <property type="evidence" value="ECO:0007669"/>
    <property type="project" value="Ensembl"/>
</dbReference>
<dbReference type="GO" id="GO:0004222">
    <property type="term" value="F:metalloendopeptidase activity"/>
    <property type="evidence" value="ECO:0007669"/>
    <property type="project" value="Ensembl"/>
</dbReference>
<dbReference type="GO" id="GO:0008270">
    <property type="term" value="F:zinc ion binding"/>
    <property type="evidence" value="ECO:0007669"/>
    <property type="project" value="Ensembl"/>
</dbReference>
<dbReference type="GO" id="GO:0060348">
    <property type="term" value="P:bone development"/>
    <property type="evidence" value="ECO:0000316"/>
    <property type="project" value="MGI"/>
</dbReference>
<dbReference type="GO" id="GO:0035988">
    <property type="term" value="P:chondrocyte proliferation"/>
    <property type="evidence" value="ECO:0000316"/>
    <property type="project" value="MGI"/>
</dbReference>
<dbReference type="GO" id="GO:0030574">
    <property type="term" value="P:collagen catabolic process"/>
    <property type="evidence" value="ECO:0000314"/>
    <property type="project" value="MGI"/>
</dbReference>
<dbReference type="GO" id="GO:0097094">
    <property type="term" value="P:craniofacial suture morphogenesis"/>
    <property type="evidence" value="ECO:0000316"/>
    <property type="project" value="MGI"/>
</dbReference>
<dbReference type="GO" id="GO:0048701">
    <property type="term" value="P:embryonic cranial skeleton morphogenesis"/>
    <property type="evidence" value="ECO:0000316"/>
    <property type="project" value="MGI"/>
</dbReference>
<dbReference type="GO" id="GO:0001958">
    <property type="term" value="P:endochondral ossification"/>
    <property type="evidence" value="ECO:0000316"/>
    <property type="project" value="MGI"/>
</dbReference>
<dbReference type="GO" id="GO:0001503">
    <property type="term" value="P:ossification"/>
    <property type="evidence" value="ECO:0000316"/>
    <property type="project" value="MGI"/>
</dbReference>
<dbReference type="GO" id="GO:0016485">
    <property type="term" value="P:protein processing"/>
    <property type="evidence" value="ECO:0007669"/>
    <property type="project" value="Ensembl"/>
</dbReference>
<dbReference type="CDD" id="cd00094">
    <property type="entry name" value="HX"/>
    <property type="match status" value="1"/>
</dbReference>
<dbReference type="CDD" id="cd04278">
    <property type="entry name" value="ZnMc_MMP"/>
    <property type="match status" value="1"/>
</dbReference>
<dbReference type="FunFam" id="3.40.390.10:FF:000005">
    <property type="entry name" value="Matrix metallopeptidase 16"/>
    <property type="match status" value="1"/>
</dbReference>
<dbReference type="FunFam" id="2.110.10.10:FF:000001">
    <property type="entry name" value="Matrix metallopeptidase 24"/>
    <property type="match status" value="1"/>
</dbReference>
<dbReference type="Gene3D" id="3.40.390.10">
    <property type="entry name" value="Collagenase (Catalytic Domain)"/>
    <property type="match status" value="1"/>
</dbReference>
<dbReference type="Gene3D" id="2.110.10.10">
    <property type="entry name" value="Hemopexin-like domain"/>
    <property type="match status" value="1"/>
</dbReference>
<dbReference type="InterPro" id="IPR000585">
    <property type="entry name" value="Hemopexin-like_dom"/>
</dbReference>
<dbReference type="InterPro" id="IPR036375">
    <property type="entry name" value="Hemopexin-like_dom_sf"/>
</dbReference>
<dbReference type="InterPro" id="IPR018487">
    <property type="entry name" value="Hemopexin-like_repeat"/>
</dbReference>
<dbReference type="InterPro" id="IPR018486">
    <property type="entry name" value="Hemopexin_CS"/>
</dbReference>
<dbReference type="InterPro" id="IPR033739">
    <property type="entry name" value="M10A_MMP"/>
</dbReference>
<dbReference type="InterPro" id="IPR024079">
    <property type="entry name" value="MetalloPept_cat_dom_sf"/>
</dbReference>
<dbReference type="InterPro" id="IPR001818">
    <property type="entry name" value="Pept_M10_metallopeptidase"/>
</dbReference>
<dbReference type="InterPro" id="IPR021190">
    <property type="entry name" value="Pept_M10A"/>
</dbReference>
<dbReference type="InterPro" id="IPR021805">
    <property type="entry name" value="Pept_M10A_metallopeptidase_C"/>
</dbReference>
<dbReference type="InterPro" id="IPR021158">
    <property type="entry name" value="Pept_M10A_Zn_BS"/>
</dbReference>
<dbReference type="InterPro" id="IPR006026">
    <property type="entry name" value="Peptidase_Metallo"/>
</dbReference>
<dbReference type="InterPro" id="IPR002477">
    <property type="entry name" value="Peptidoglycan-bd-like"/>
</dbReference>
<dbReference type="InterPro" id="IPR036365">
    <property type="entry name" value="PGBD-like_sf"/>
</dbReference>
<dbReference type="PANTHER" id="PTHR10201">
    <property type="entry name" value="MATRIX METALLOPROTEINASE"/>
    <property type="match status" value="1"/>
</dbReference>
<dbReference type="PANTHER" id="PTHR10201:SF26">
    <property type="entry name" value="MATRIX METALLOPROTEINASE-16"/>
    <property type="match status" value="1"/>
</dbReference>
<dbReference type="Pfam" id="PF11857">
    <property type="entry name" value="DUF3377"/>
    <property type="match status" value="1"/>
</dbReference>
<dbReference type="Pfam" id="PF00045">
    <property type="entry name" value="Hemopexin"/>
    <property type="match status" value="4"/>
</dbReference>
<dbReference type="Pfam" id="PF00413">
    <property type="entry name" value="Peptidase_M10"/>
    <property type="match status" value="1"/>
</dbReference>
<dbReference type="Pfam" id="PF01471">
    <property type="entry name" value="PG_binding_1"/>
    <property type="match status" value="1"/>
</dbReference>
<dbReference type="PIRSF" id="PIRSF001191">
    <property type="entry name" value="Peptidase_M10A_matrix"/>
    <property type="match status" value="1"/>
</dbReference>
<dbReference type="PRINTS" id="PR00138">
    <property type="entry name" value="MATRIXIN"/>
</dbReference>
<dbReference type="SMART" id="SM00120">
    <property type="entry name" value="HX"/>
    <property type="match status" value="4"/>
</dbReference>
<dbReference type="SMART" id="SM00235">
    <property type="entry name" value="ZnMc"/>
    <property type="match status" value="1"/>
</dbReference>
<dbReference type="SUPFAM" id="SSF50923">
    <property type="entry name" value="Hemopexin-like domain"/>
    <property type="match status" value="1"/>
</dbReference>
<dbReference type="SUPFAM" id="SSF55486">
    <property type="entry name" value="Metalloproteases ('zincins'), catalytic domain"/>
    <property type="match status" value="1"/>
</dbReference>
<dbReference type="SUPFAM" id="SSF47090">
    <property type="entry name" value="PGBD-like"/>
    <property type="match status" value="1"/>
</dbReference>
<dbReference type="PROSITE" id="PS00546">
    <property type="entry name" value="CYSTEINE_SWITCH"/>
    <property type="match status" value="1"/>
</dbReference>
<dbReference type="PROSITE" id="PS00024">
    <property type="entry name" value="HEMOPEXIN"/>
    <property type="match status" value="1"/>
</dbReference>
<dbReference type="PROSITE" id="PS51642">
    <property type="entry name" value="HEMOPEXIN_2"/>
    <property type="match status" value="4"/>
</dbReference>
<dbReference type="PROSITE" id="PS00142">
    <property type="entry name" value="ZINC_PROTEASE"/>
    <property type="match status" value="1"/>
</dbReference>
<comment type="function">
    <text evidence="1">Endopeptidase that degrades various components of the extracellular matrix, such as collagen type III and fibronectin. Activates progelatinase A. Involved in the matrix remodeling of blood vessels. It has no effect on type I, II, IV and V collagen. However, upon interaction with CSPG4, it may be involved in degradation and invasion of type I collagen by melanoma cells (By similarity).</text>
</comment>
<comment type="cofactor">
    <cofactor evidence="1">
        <name>Zn(2+)</name>
        <dbReference type="ChEBI" id="CHEBI:29105"/>
    </cofactor>
    <text evidence="1">Binds 2 zinc ions per subunit.</text>
</comment>
<comment type="cofactor">
    <cofactor evidence="1">
        <name>Ca(2+)</name>
        <dbReference type="ChEBI" id="CHEBI:29108"/>
    </cofactor>
</comment>
<comment type="subunit">
    <text evidence="1">Interacts with CSPG4 through CSPG4 chondroitin sulfate glycosaminoglycan.</text>
</comment>
<comment type="subcellular location">
    <subcellularLocation>
        <location evidence="6">Cell membrane</location>
        <topology evidence="6">Single-pass type I membrane protein</topology>
        <orientation evidence="6">Extracellular side</orientation>
    </subcellularLocation>
    <text evidence="1">Localized at the cell surface of melanoma cells.</text>
</comment>
<comment type="domain">
    <text>The conserved cysteine present in the cysteine-switch motif binds the catalytic zinc ion, thus inhibiting the enzyme. The dissociation of the cysteine from the zinc ion upon the activation-peptide release activates the enzyme.</text>
</comment>
<comment type="PTM">
    <text evidence="1">The precursor is cleaved by a furin endopeptidase.</text>
</comment>
<comment type="similarity">
    <text evidence="6">Belongs to the peptidase M10A family.</text>
</comment>
<feature type="signal peptide" evidence="3">
    <location>
        <begin position="1"/>
        <end position="31"/>
    </location>
</feature>
<feature type="propeptide" id="PRO_0000028814" evidence="1">
    <location>
        <begin position="32"/>
        <end position="119"/>
    </location>
</feature>
<feature type="chain" id="PRO_0000028815" description="Matrix metalloproteinase-16">
    <location>
        <begin position="120"/>
        <end position="607"/>
    </location>
</feature>
<feature type="topological domain" description="Extracellular" evidence="3">
    <location>
        <begin position="120"/>
        <end position="564"/>
    </location>
</feature>
<feature type="transmembrane region" description="Helical" evidence="3">
    <location>
        <begin position="565"/>
        <end position="585"/>
    </location>
</feature>
<feature type="topological domain" description="Cytoplasmic" evidence="3">
    <location>
        <begin position="586"/>
        <end position="607"/>
    </location>
</feature>
<feature type="repeat" description="Hemopexin 1">
    <location>
        <begin position="340"/>
        <end position="388"/>
    </location>
</feature>
<feature type="repeat" description="Hemopexin 2">
    <location>
        <begin position="389"/>
        <end position="434"/>
    </location>
</feature>
<feature type="repeat" description="Hemopexin 3">
    <location>
        <begin position="436"/>
        <end position="484"/>
    </location>
</feature>
<feature type="repeat" description="Hemopexin 4">
    <location>
        <begin position="485"/>
        <end position="532"/>
    </location>
</feature>
<feature type="region of interest" description="Disordered" evidence="5">
    <location>
        <begin position="281"/>
        <end position="340"/>
    </location>
</feature>
<feature type="short sequence motif" description="Cysteine switch" evidence="1">
    <location>
        <begin position="99"/>
        <end position="106"/>
    </location>
</feature>
<feature type="compositionally biased region" description="Pro residues" evidence="5">
    <location>
        <begin position="294"/>
        <end position="315"/>
    </location>
</feature>
<feature type="active site" evidence="4">
    <location>
        <position position="247"/>
    </location>
</feature>
<feature type="binding site" description="in inhibited form" evidence="1">
    <location>
        <position position="101"/>
    </location>
    <ligand>
        <name>Zn(2+)</name>
        <dbReference type="ChEBI" id="CHEBI:29105"/>
        <label>2</label>
        <note>catalytic</note>
    </ligand>
</feature>
<feature type="binding site" evidence="2">
    <location>
        <position position="183"/>
    </location>
    <ligand>
        <name>Ca(2+)</name>
        <dbReference type="ChEBI" id="CHEBI:29108"/>
        <label>1</label>
    </ligand>
</feature>
<feature type="binding site" evidence="2">
    <location>
        <position position="193"/>
    </location>
    <ligand>
        <name>Zn(2+)</name>
        <dbReference type="ChEBI" id="CHEBI:29105"/>
        <label>1</label>
        <note>structural</note>
    </ligand>
</feature>
<feature type="binding site" evidence="2">
    <location>
        <position position="195"/>
    </location>
    <ligand>
        <name>Zn(2+)</name>
        <dbReference type="ChEBI" id="CHEBI:29105"/>
        <label>1</label>
        <note>structural</note>
    </ligand>
</feature>
<feature type="binding site" evidence="2">
    <location>
        <position position="200"/>
    </location>
    <ligand>
        <name>Ca(2+)</name>
        <dbReference type="ChEBI" id="CHEBI:29108"/>
        <label>2</label>
    </ligand>
</feature>
<feature type="binding site" evidence="2">
    <location>
        <position position="201"/>
    </location>
    <ligand>
        <name>Ca(2+)</name>
        <dbReference type="ChEBI" id="CHEBI:29108"/>
        <label>2</label>
    </ligand>
</feature>
<feature type="binding site" evidence="2">
    <location>
        <position position="203"/>
    </location>
    <ligand>
        <name>Ca(2+)</name>
        <dbReference type="ChEBI" id="CHEBI:29108"/>
        <label>2</label>
    </ligand>
</feature>
<feature type="binding site" evidence="2">
    <location>
        <position position="205"/>
    </location>
    <ligand>
        <name>Ca(2+)</name>
        <dbReference type="ChEBI" id="CHEBI:29108"/>
        <label>2</label>
    </ligand>
</feature>
<feature type="binding site" evidence="2">
    <location>
        <position position="208"/>
    </location>
    <ligand>
        <name>Zn(2+)</name>
        <dbReference type="ChEBI" id="CHEBI:29105"/>
        <label>1</label>
        <note>structural</note>
    </ligand>
</feature>
<feature type="binding site" evidence="2">
    <location>
        <position position="215"/>
    </location>
    <ligand>
        <name>Ca(2+)</name>
        <dbReference type="ChEBI" id="CHEBI:29108"/>
        <label>1</label>
    </ligand>
</feature>
<feature type="binding site" evidence="1">
    <location>
        <position position="217"/>
    </location>
    <ligand>
        <name>Ca(2+)</name>
        <dbReference type="ChEBI" id="CHEBI:29108"/>
        <label>1</label>
    </ligand>
</feature>
<feature type="binding site" evidence="2">
    <location>
        <position position="219"/>
    </location>
    <ligand>
        <name>Ca(2+)</name>
        <dbReference type="ChEBI" id="CHEBI:29108"/>
        <label>1</label>
    </ligand>
</feature>
<feature type="binding site" evidence="2">
    <location>
        <position position="221"/>
    </location>
    <ligand>
        <name>Zn(2+)</name>
        <dbReference type="ChEBI" id="CHEBI:29105"/>
        <label>1</label>
        <note>structural</note>
    </ligand>
</feature>
<feature type="binding site" evidence="2">
    <location>
        <position position="223"/>
    </location>
    <ligand>
        <name>Ca(2+)</name>
        <dbReference type="ChEBI" id="CHEBI:29108"/>
        <label>2</label>
    </ligand>
</feature>
<feature type="binding site" evidence="2">
    <location>
        <position position="226"/>
    </location>
    <ligand>
        <name>Ca(2+)</name>
        <dbReference type="ChEBI" id="CHEBI:29108"/>
        <label>2</label>
    </ligand>
</feature>
<feature type="binding site" evidence="2">
    <location>
        <position position="246"/>
    </location>
    <ligand>
        <name>Zn(2+)</name>
        <dbReference type="ChEBI" id="CHEBI:29105"/>
        <label>2</label>
        <note>catalytic</note>
    </ligand>
</feature>
<feature type="binding site" evidence="2">
    <location>
        <position position="250"/>
    </location>
    <ligand>
        <name>Zn(2+)</name>
        <dbReference type="ChEBI" id="CHEBI:29105"/>
        <label>2</label>
        <note>catalytic</note>
    </ligand>
</feature>
<feature type="binding site" evidence="2">
    <location>
        <position position="256"/>
    </location>
    <ligand>
        <name>Zn(2+)</name>
        <dbReference type="ChEBI" id="CHEBI:29105"/>
        <label>2</label>
        <note>catalytic</note>
    </ligand>
</feature>
<feature type="glycosylation site" description="N-linked (GlcNAc...) asparagine" evidence="3">
    <location>
        <position position="83"/>
    </location>
</feature>
<feature type="disulfide bond" evidence="1">
    <location>
        <begin position="343"/>
        <end position="532"/>
    </location>
</feature>
<feature type="sequence conflict" description="In Ref. 1; BAA78420." evidence="6" ref="1">
    <original>R</original>
    <variation>H</variation>
    <location>
        <position position="17"/>
    </location>
</feature>
<feature type="sequence conflict" description="In Ref. 2; AAG17704." evidence="6" ref="2">
    <original>G</original>
    <variation>V</variation>
    <location>
        <position position="19"/>
    </location>
</feature>
<feature type="sequence conflict" description="In Ref. 2; AAG17704." evidence="6" ref="2">
    <original>S</original>
    <variation>R</variation>
    <location>
        <position position="196"/>
    </location>
</feature>
<organism>
    <name type="scientific">Mus musculus</name>
    <name type="common">Mouse</name>
    <dbReference type="NCBI Taxonomy" id="10090"/>
    <lineage>
        <taxon>Eukaryota</taxon>
        <taxon>Metazoa</taxon>
        <taxon>Chordata</taxon>
        <taxon>Craniata</taxon>
        <taxon>Vertebrata</taxon>
        <taxon>Euteleostomi</taxon>
        <taxon>Mammalia</taxon>
        <taxon>Eutheria</taxon>
        <taxon>Euarchontoglires</taxon>
        <taxon>Glires</taxon>
        <taxon>Rodentia</taxon>
        <taxon>Myomorpha</taxon>
        <taxon>Muroidea</taxon>
        <taxon>Muridae</taxon>
        <taxon>Murinae</taxon>
        <taxon>Mus</taxon>
        <taxon>Mus</taxon>
    </lineage>
</organism>
<protein>
    <recommendedName>
        <fullName>Matrix metalloproteinase-16</fullName>
        <shortName>MMP-16</shortName>
        <ecNumber>3.4.24.-</ecNumber>
    </recommendedName>
    <alternativeName>
        <fullName>Membrane-type matrix metalloproteinase 3</fullName>
        <shortName>MT-MMP 3</shortName>
        <shortName>MTMMP3</shortName>
    </alternativeName>
    <alternativeName>
        <fullName>Membrane-type-3 matrix metalloproteinase</fullName>
        <shortName>MT3-MMP</shortName>
        <shortName>MT3MMP</shortName>
    </alternativeName>
</protein>
<accession>Q9WTR0</accession>
<accession>Q6PEQ6</accession>
<accession>Q9ERT6</accession>
<evidence type="ECO:0000250" key="1"/>
<evidence type="ECO:0000250" key="2">
    <source>
        <dbReference type="UniProtKB" id="P51512"/>
    </source>
</evidence>
<evidence type="ECO:0000255" key="3"/>
<evidence type="ECO:0000255" key="4">
    <source>
        <dbReference type="PROSITE-ProRule" id="PRU10095"/>
    </source>
</evidence>
<evidence type="ECO:0000256" key="5">
    <source>
        <dbReference type="SAM" id="MobiDB-lite"/>
    </source>
</evidence>
<evidence type="ECO:0000305" key="6"/>
<keyword id="KW-0106">Calcium</keyword>
<keyword id="KW-1003">Cell membrane</keyword>
<keyword id="KW-0165">Cleavage on pair of basic residues</keyword>
<keyword id="KW-0177">Collagen degradation</keyword>
<keyword id="KW-1015">Disulfide bond</keyword>
<keyword id="KW-0325">Glycoprotein</keyword>
<keyword id="KW-0378">Hydrolase</keyword>
<keyword id="KW-0472">Membrane</keyword>
<keyword id="KW-0479">Metal-binding</keyword>
<keyword id="KW-0482">Metalloprotease</keyword>
<keyword id="KW-0645">Protease</keyword>
<keyword id="KW-1185">Reference proteome</keyword>
<keyword id="KW-0677">Repeat</keyword>
<keyword id="KW-0732">Signal</keyword>
<keyword id="KW-0812">Transmembrane</keyword>
<keyword id="KW-1133">Transmembrane helix</keyword>
<keyword id="KW-0862">Zinc</keyword>
<keyword id="KW-0865">Zymogen</keyword>
<name>MMP16_MOUSE</name>
<reference key="1">
    <citation type="submission" date="1999-06" db="EMBL/GenBank/DDBJ databases">
        <authorList>
            <person name="Seiki M."/>
            <person name="Kinoh H."/>
        </authorList>
    </citation>
    <scope>NUCLEOTIDE SEQUENCE [MRNA]</scope>
</reference>
<reference key="2">
    <citation type="submission" date="2000-06" db="EMBL/GenBank/DDBJ databases">
        <title>Differential localization and Triton X-100 solubility of membrane-type matrix metalloproteinases 1-3.</title>
        <authorList>
            <person name="Budde P."/>
            <person name="Gatsios P."/>
            <person name="Nienaber N.T."/>
            <person name="Li H."/>
            <person name="Staege M.S."/>
            <person name="Graeve L."/>
            <person name="Heinrich P.C."/>
            <person name="Frey J."/>
        </authorList>
    </citation>
    <scope>NUCLEOTIDE SEQUENCE [MRNA]</scope>
    <source>
        <strain>C57BL/6J</strain>
        <tissue>Brain</tissue>
    </source>
</reference>
<reference key="3">
    <citation type="journal article" date="2009" name="PLoS Biol.">
        <title>Lineage-specific biology revealed by a finished genome assembly of the mouse.</title>
        <authorList>
            <person name="Church D.M."/>
            <person name="Goodstadt L."/>
            <person name="Hillier L.W."/>
            <person name="Zody M.C."/>
            <person name="Goldstein S."/>
            <person name="She X."/>
            <person name="Bult C.J."/>
            <person name="Agarwala R."/>
            <person name="Cherry J.L."/>
            <person name="DiCuccio M."/>
            <person name="Hlavina W."/>
            <person name="Kapustin Y."/>
            <person name="Meric P."/>
            <person name="Maglott D."/>
            <person name="Birtle Z."/>
            <person name="Marques A.C."/>
            <person name="Graves T."/>
            <person name="Zhou S."/>
            <person name="Teague B."/>
            <person name="Potamousis K."/>
            <person name="Churas C."/>
            <person name="Place M."/>
            <person name="Herschleb J."/>
            <person name="Runnheim R."/>
            <person name="Forrest D."/>
            <person name="Amos-Landgraf J."/>
            <person name="Schwartz D.C."/>
            <person name="Cheng Z."/>
            <person name="Lindblad-Toh K."/>
            <person name="Eichler E.E."/>
            <person name="Ponting C.P."/>
        </authorList>
    </citation>
    <scope>NUCLEOTIDE SEQUENCE [LARGE SCALE GENOMIC DNA]</scope>
    <source>
        <strain>C57BL/6J</strain>
    </source>
</reference>
<reference key="4">
    <citation type="submission" date="2005-09" db="EMBL/GenBank/DDBJ databases">
        <authorList>
            <person name="Mural R.J."/>
            <person name="Adams M.D."/>
            <person name="Myers E.W."/>
            <person name="Smith H.O."/>
            <person name="Venter J.C."/>
        </authorList>
    </citation>
    <scope>NUCLEOTIDE SEQUENCE [LARGE SCALE GENOMIC DNA]</scope>
</reference>
<reference key="5">
    <citation type="journal article" date="2004" name="Genome Res.">
        <title>The status, quality, and expansion of the NIH full-length cDNA project: the Mammalian Gene Collection (MGC).</title>
        <authorList>
            <consortium name="The MGC Project Team"/>
        </authorList>
    </citation>
    <scope>NUCLEOTIDE SEQUENCE [LARGE SCALE MRNA]</scope>
    <source>
        <strain>129</strain>
        <tissue>Mammary tumor</tissue>
    </source>
</reference>
<sequence length="607" mass="69571">MILLAFSSGRRLDFVHRSGVFFLQTLLWILCATVCGTEQYFNVEVWLQKYGYLPPTDPRMSVLRSAETMQSALAAMQQFYGINMTGKVDRNTIDWMKKPRCGVPDQTRGSSKFNIRRKRYALTGQKWQHKHITYSIKNVTPKVGDPETRRAIRRAFDVWQNVTPLTFEEVPYSELENGKRDVDITIIFASGFHGDSSPFDGEGGFLAHAYFPGPGIGGDTHFDSDEPWTLGNPNHDGNDLFLVAVHELGHALGLEHSNDPTAIMAPFYQYMETDNFKLPNDDLQGIQKIYGPPDKIPPPTRPLPTVPPHRSVPPADPRRHDRPKPPRPPTGRPSYPGAKPNICDGNFNTLAILRREMFVFKDQWFWRVRNNRVMDGYPMQITYFWRGLPPSIDAVYENSDGNFVFFKGNKYWVFKDTTLQPGYPHDLITLGNGIPPHGIDSAIWWEDVGKTYFFKGDRYWRYSEEMKTMDPGYPKPITIWKGIPESPQGAFVHKENGFTYFYKGKEYWKFNNQILKVEPGYPRSILKDFMGCDGPTDRDKEGLSPPDDVDIVIKLDNTASTVKAIAIVIPCILALCLLVLVYTVFQFKRKGTPRHILYCKRSMQEWV</sequence>
<proteinExistence type="evidence at transcript level"/>
<gene>
    <name type="primary">Mmp16</name>
</gene>